<evidence type="ECO:0000250" key="1"/>
<evidence type="ECO:0000255" key="2"/>
<evidence type="ECO:0000256" key="3">
    <source>
        <dbReference type="SAM" id="MobiDB-lite"/>
    </source>
</evidence>
<evidence type="ECO:0000305" key="4"/>
<organism>
    <name type="scientific">Yersinia enterocolitica</name>
    <dbReference type="NCBI Taxonomy" id="630"/>
    <lineage>
        <taxon>Bacteria</taxon>
        <taxon>Pseudomonadati</taxon>
        <taxon>Pseudomonadota</taxon>
        <taxon>Gammaproteobacteria</taxon>
        <taxon>Enterobacterales</taxon>
        <taxon>Yersiniaceae</taxon>
        <taxon>Yersinia</taxon>
    </lineage>
</organism>
<feature type="chain" id="PRO_0000180955" description="Flagellar biosynthetic protein FlhB">
    <location>
        <begin position="1"/>
        <end position="383"/>
    </location>
</feature>
<feature type="transmembrane region" description="Helical" evidence="2">
    <location>
        <begin position="33"/>
        <end position="53"/>
    </location>
</feature>
<feature type="transmembrane region" description="Helical" evidence="2">
    <location>
        <begin position="91"/>
        <end position="111"/>
    </location>
</feature>
<feature type="transmembrane region" description="Helical" evidence="2">
    <location>
        <begin position="146"/>
        <end position="166"/>
    </location>
</feature>
<feature type="transmembrane region" description="Helical" evidence="2">
    <location>
        <begin position="187"/>
        <end position="207"/>
    </location>
</feature>
<feature type="region of interest" description="Disordered" evidence="3">
    <location>
        <begin position="1"/>
        <end position="27"/>
    </location>
</feature>
<feature type="compositionally biased region" description="Basic and acidic residues" evidence="3">
    <location>
        <begin position="7"/>
        <end position="27"/>
    </location>
</feature>
<dbReference type="EMBL" id="Z48169">
    <property type="protein sequence ID" value="CAA88185.1"/>
    <property type="molecule type" value="Genomic_DNA"/>
</dbReference>
<dbReference type="PIR" id="S54213">
    <property type="entry name" value="S54213"/>
</dbReference>
<dbReference type="SMR" id="Q56886"/>
<dbReference type="STRING" id="1443113.LC20_02146"/>
<dbReference type="eggNOG" id="COG1377">
    <property type="taxonomic scope" value="Bacteria"/>
</dbReference>
<dbReference type="GO" id="GO:0005886">
    <property type="term" value="C:plasma membrane"/>
    <property type="evidence" value="ECO:0007669"/>
    <property type="project" value="UniProtKB-SubCell"/>
</dbReference>
<dbReference type="GO" id="GO:0044780">
    <property type="term" value="P:bacterial-type flagellum assembly"/>
    <property type="evidence" value="ECO:0007669"/>
    <property type="project" value="InterPro"/>
</dbReference>
<dbReference type="GO" id="GO:0009306">
    <property type="term" value="P:protein secretion"/>
    <property type="evidence" value="ECO:0007669"/>
    <property type="project" value="InterPro"/>
</dbReference>
<dbReference type="FunFam" id="3.40.1690.10:FF:000001">
    <property type="entry name" value="Flagellar biosynthetic protein FlhB"/>
    <property type="match status" value="1"/>
</dbReference>
<dbReference type="Gene3D" id="6.10.250.2080">
    <property type="match status" value="1"/>
</dbReference>
<dbReference type="Gene3D" id="3.40.1690.10">
    <property type="entry name" value="secretion proteins EscU"/>
    <property type="match status" value="1"/>
</dbReference>
<dbReference type="InterPro" id="IPR006136">
    <property type="entry name" value="FlhB"/>
</dbReference>
<dbReference type="InterPro" id="IPR006135">
    <property type="entry name" value="T3SS_substrate_exporter"/>
</dbReference>
<dbReference type="InterPro" id="IPR029025">
    <property type="entry name" value="T3SS_substrate_exporter_C"/>
</dbReference>
<dbReference type="NCBIfam" id="TIGR00328">
    <property type="entry name" value="flhB"/>
    <property type="match status" value="1"/>
</dbReference>
<dbReference type="NCBIfam" id="NF009117">
    <property type="entry name" value="PRK12468.1"/>
    <property type="match status" value="1"/>
</dbReference>
<dbReference type="PANTHER" id="PTHR30531">
    <property type="entry name" value="FLAGELLAR BIOSYNTHETIC PROTEIN FLHB"/>
    <property type="match status" value="1"/>
</dbReference>
<dbReference type="PANTHER" id="PTHR30531:SF12">
    <property type="entry name" value="FLAGELLAR BIOSYNTHETIC PROTEIN FLHB"/>
    <property type="match status" value="1"/>
</dbReference>
<dbReference type="Pfam" id="PF01312">
    <property type="entry name" value="Bac_export_2"/>
    <property type="match status" value="1"/>
</dbReference>
<dbReference type="PRINTS" id="PR00950">
    <property type="entry name" value="TYPE3IMSPROT"/>
</dbReference>
<dbReference type="SUPFAM" id="SSF160544">
    <property type="entry name" value="EscU C-terminal domain-like"/>
    <property type="match status" value="1"/>
</dbReference>
<gene>
    <name type="primary">flhB</name>
</gene>
<sequence>MAEDSDADKSEEPTAHKLEKAREKGQIPRSRELTSMLMLGAGLAILWVSGESMARQLAAMIAQGLHFDHGLISDDKQMLRQIGMLLRQTLIGLIPIFAGLVIVAMAVPMLLGGVLFSGESIKFDLKRMSPIAGLKRMFSSQALAELLKAILKATLVGWVTGIFLWHNWPDMMRLMAAPPVAALGDALHLIIFCGLVVVLGLTPMVGFDVFFQITSHIKKLRMTKQEIRDEFKDQEGDPHVKGRIRQQQRAMARRRMMADVHKADVIVTNPTHYAVALQYNETKMSAPKVLAKGAGAVALRIRELGAEHRIPLLEAPPLARALFRHSEVGQHIPATLYAAVAEVLAWVYQLKRWKREGGLIPKKPEHLPVPEGLDFATEESETD</sequence>
<reference key="1">
    <citation type="submission" date="1995-05" db="EMBL/GenBank/DDBJ databases">
        <authorList>
            <person name="Fauconnier A."/>
            <person name="Allaoui A."/>
            <person name="van Elsen A."/>
            <person name="Cornelis G."/>
            <person name="Bollen A."/>
        </authorList>
    </citation>
    <scope>NUCLEOTIDE SEQUENCE [GENOMIC DNA]</scope>
    <source>
        <strain>W1024 / Serotype O:9</strain>
    </source>
</reference>
<proteinExistence type="inferred from homology"/>
<comment type="function">
    <text evidence="1">Required for formation of the rod structure in the basal body of the flagellar apparatus. Together with FliI and FliH, may constitute the export apparatus of flagellin (By similarity).</text>
</comment>
<comment type="subcellular location">
    <subcellularLocation>
        <location evidence="4">Cell inner membrane</location>
        <topology evidence="4">Multi-pass membrane protein</topology>
    </subcellularLocation>
</comment>
<comment type="similarity">
    <text evidence="4">Belongs to the type III secretion exporter family.</text>
</comment>
<accession>Q56886</accession>
<name>FLHB_YEREN</name>
<keyword id="KW-1005">Bacterial flagellum biogenesis</keyword>
<keyword id="KW-1006">Bacterial flagellum protein export</keyword>
<keyword id="KW-0997">Cell inner membrane</keyword>
<keyword id="KW-1003">Cell membrane</keyword>
<keyword id="KW-0472">Membrane</keyword>
<keyword id="KW-0653">Protein transport</keyword>
<keyword id="KW-0812">Transmembrane</keyword>
<keyword id="KW-1133">Transmembrane helix</keyword>
<keyword id="KW-0813">Transport</keyword>
<protein>
    <recommendedName>
        <fullName>Flagellar biosynthetic protein FlhB</fullName>
    </recommendedName>
</protein>